<name>NUOK_BORA1</name>
<gene>
    <name evidence="1" type="primary">nuoK</name>
    <name type="ordered locus">BAV1052</name>
</gene>
<dbReference type="EC" id="7.1.1.-" evidence="1"/>
<dbReference type="EMBL" id="AM167904">
    <property type="protein sequence ID" value="CAJ48661.1"/>
    <property type="molecule type" value="Genomic_DNA"/>
</dbReference>
<dbReference type="RefSeq" id="WP_012416736.1">
    <property type="nucleotide sequence ID" value="NC_010645.1"/>
</dbReference>
<dbReference type="SMR" id="Q2KUZ4"/>
<dbReference type="STRING" id="360910.BAV1052"/>
<dbReference type="GeneID" id="92935754"/>
<dbReference type="KEGG" id="bav:BAV1052"/>
<dbReference type="eggNOG" id="COG0713">
    <property type="taxonomic scope" value="Bacteria"/>
</dbReference>
<dbReference type="HOGENOM" id="CLU_144724_2_0_4"/>
<dbReference type="Proteomes" id="UP000001977">
    <property type="component" value="Chromosome"/>
</dbReference>
<dbReference type="GO" id="GO:0030964">
    <property type="term" value="C:NADH dehydrogenase complex"/>
    <property type="evidence" value="ECO:0007669"/>
    <property type="project" value="TreeGrafter"/>
</dbReference>
<dbReference type="GO" id="GO:0005886">
    <property type="term" value="C:plasma membrane"/>
    <property type="evidence" value="ECO:0007669"/>
    <property type="project" value="UniProtKB-SubCell"/>
</dbReference>
<dbReference type="GO" id="GO:0050136">
    <property type="term" value="F:NADH:ubiquinone reductase (non-electrogenic) activity"/>
    <property type="evidence" value="ECO:0007669"/>
    <property type="project" value="UniProtKB-UniRule"/>
</dbReference>
<dbReference type="GO" id="GO:0048038">
    <property type="term" value="F:quinone binding"/>
    <property type="evidence" value="ECO:0007669"/>
    <property type="project" value="UniProtKB-KW"/>
</dbReference>
<dbReference type="GO" id="GO:0042773">
    <property type="term" value="P:ATP synthesis coupled electron transport"/>
    <property type="evidence" value="ECO:0007669"/>
    <property type="project" value="InterPro"/>
</dbReference>
<dbReference type="FunFam" id="1.10.287.3510:FF:000001">
    <property type="entry name" value="NADH-quinone oxidoreductase subunit K"/>
    <property type="match status" value="1"/>
</dbReference>
<dbReference type="Gene3D" id="1.10.287.3510">
    <property type="match status" value="1"/>
</dbReference>
<dbReference type="HAMAP" id="MF_01456">
    <property type="entry name" value="NDH1_NuoK"/>
    <property type="match status" value="1"/>
</dbReference>
<dbReference type="InterPro" id="IPR001133">
    <property type="entry name" value="NADH_UbQ_OxRdtase_chain4L/K"/>
</dbReference>
<dbReference type="InterPro" id="IPR039428">
    <property type="entry name" value="NUOK/Mnh_C1-like"/>
</dbReference>
<dbReference type="NCBIfam" id="NF004320">
    <property type="entry name" value="PRK05715.1-2"/>
    <property type="match status" value="1"/>
</dbReference>
<dbReference type="NCBIfam" id="NF004321">
    <property type="entry name" value="PRK05715.1-3"/>
    <property type="match status" value="1"/>
</dbReference>
<dbReference type="NCBIfam" id="NF004323">
    <property type="entry name" value="PRK05715.1-5"/>
    <property type="match status" value="1"/>
</dbReference>
<dbReference type="PANTHER" id="PTHR11434:SF21">
    <property type="entry name" value="NADH DEHYDROGENASE SUBUNIT 4L-RELATED"/>
    <property type="match status" value="1"/>
</dbReference>
<dbReference type="PANTHER" id="PTHR11434">
    <property type="entry name" value="NADH-UBIQUINONE OXIDOREDUCTASE SUBUNIT ND4L"/>
    <property type="match status" value="1"/>
</dbReference>
<dbReference type="Pfam" id="PF00420">
    <property type="entry name" value="Oxidored_q2"/>
    <property type="match status" value="1"/>
</dbReference>
<evidence type="ECO:0000255" key="1">
    <source>
        <dbReference type="HAMAP-Rule" id="MF_01456"/>
    </source>
</evidence>
<proteinExistence type="inferred from homology"/>
<feature type="chain" id="PRO_0000389962" description="NADH-quinone oxidoreductase subunit K">
    <location>
        <begin position="1"/>
        <end position="102"/>
    </location>
</feature>
<feature type="transmembrane region" description="Helical" evidence="1">
    <location>
        <begin position="5"/>
        <end position="25"/>
    </location>
</feature>
<feature type="transmembrane region" description="Helical" evidence="1">
    <location>
        <begin position="31"/>
        <end position="51"/>
    </location>
</feature>
<feature type="transmembrane region" description="Helical" evidence="1">
    <location>
        <begin position="62"/>
        <end position="82"/>
    </location>
</feature>
<organism>
    <name type="scientific">Bordetella avium (strain 197N)</name>
    <dbReference type="NCBI Taxonomy" id="360910"/>
    <lineage>
        <taxon>Bacteria</taxon>
        <taxon>Pseudomonadati</taxon>
        <taxon>Pseudomonadota</taxon>
        <taxon>Betaproteobacteria</taxon>
        <taxon>Burkholderiales</taxon>
        <taxon>Alcaligenaceae</taxon>
        <taxon>Bordetella</taxon>
    </lineage>
</organism>
<accession>Q2KUZ4</accession>
<keyword id="KW-0997">Cell inner membrane</keyword>
<keyword id="KW-1003">Cell membrane</keyword>
<keyword id="KW-0472">Membrane</keyword>
<keyword id="KW-0520">NAD</keyword>
<keyword id="KW-0874">Quinone</keyword>
<keyword id="KW-1185">Reference proteome</keyword>
<keyword id="KW-1278">Translocase</keyword>
<keyword id="KW-0812">Transmembrane</keyword>
<keyword id="KW-1133">Transmembrane helix</keyword>
<keyword id="KW-0813">Transport</keyword>
<keyword id="KW-0830">Ubiquinone</keyword>
<sequence>MTITLAHYLILGAILFAIGIFGIFLNRRNLIILLMSIELMLLAVNMNFVAFSSWFGDTAGQVFVFFILTVAAAEAAIGLAILVLLFRNLNTINVDDLDRLKG</sequence>
<protein>
    <recommendedName>
        <fullName evidence="1">NADH-quinone oxidoreductase subunit K</fullName>
        <ecNumber evidence="1">7.1.1.-</ecNumber>
    </recommendedName>
    <alternativeName>
        <fullName evidence="1">NADH dehydrogenase I subunit K</fullName>
    </alternativeName>
    <alternativeName>
        <fullName evidence="1">NDH-1 subunit K</fullName>
    </alternativeName>
</protein>
<comment type="function">
    <text evidence="1">NDH-1 shuttles electrons from NADH, via FMN and iron-sulfur (Fe-S) centers, to quinones in the respiratory chain. The immediate electron acceptor for the enzyme in this species is believed to be ubiquinone. Couples the redox reaction to proton translocation (for every two electrons transferred, four hydrogen ions are translocated across the cytoplasmic membrane), and thus conserves the redox energy in a proton gradient.</text>
</comment>
<comment type="catalytic activity">
    <reaction evidence="1">
        <text>a quinone + NADH + 5 H(+)(in) = a quinol + NAD(+) + 4 H(+)(out)</text>
        <dbReference type="Rhea" id="RHEA:57888"/>
        <dbReference type="ChEBI" id="CHEBI:15378"/>
        <dbReference type="ChEBI" id="CHEBI:24646"/>
        <dbReference type="ChEBI" id="CHEBI:57540"/>
        <dbReference type="ChEBI" id="CHEBI:57945"/>
        <dbReference type="ChEBI" id="CHEBI:132124"/>
    </reaction>
</comment>
<comment type="subunit">
    <text evidence="1">NDH-1 is composed of 14 different subunits. Subunits NuoA, H, J, K, L, M, N constitute the membrane sector of the complex.</text>
</comment>
<comment type="subcellular location">
    <subcellularLocation>
        <location evidence="1">Cell inner membrane</location>
        <topology evidence="1">Multi-pass membrane protein</topology>
    </subcellularLocation>
</comment>
<comment type="similarity">
    <text evidence="1">Belongs to the complex I subunit 4L family.</text>
</comment>
<reference key="1">
    <citation type="journal article" date="2006" name="J. Bacteriol.">
        <title>Comparison of the genome sequence of the poultry pathogen Bordetella avium with those of B. bronchiseptica, B. pertussis, and B. parapertussis reveals extensive diversity in surface structures associated with host interaction.</title>
        <authorList>
            <person name="Sebaihia M."/>
            <person name="Preston A."/>
            <person name="Maskell D.J."/>
            <person name="Kuzmiak H."/>
            <person name="Connell T.D."/>
            <person name="King N.D."/>
            <person name="Orndorff P.E."/>
            <person name="Miyamoto D.M."/>
            <person name="Thomson N.R."/>
            <person name="Harris D."/>
            <person name="Goble A."/>
            <person name="Lord A."/>
            <person name="Murphy L."/>
            <person name="Quail M.A."/>
            <person name="Rutter S."/>
            <person name="Squares R."/>
            <person name="Squares S."/>
            <person name="Woodward J."/>
            <person name="Parkhill J."/>
            <person name="Temple L.M."/>
        </authorList>
    </citation>
    <scope>NUCLEOTIDE SEQUENCE [LARGE SCALE GENOMIC DNA]</scope>
    <source>
        <strain>197N</strain>
    </source>
</reference>